<dbReference type="EC" id="3.1.-.-"/>
<dbReference type="EMBL" id="AL954747">
    <property type="protein sequence ID" value="CAD84021.1"/>
    <property type="molecule type" value="Genomic_DNA"/>
</dbReference>
<dbReference type="SMR" id="Q82XY2"/>
<dbReference type="STRING" id="228410.NE0110"/>
<dbReference type="KEGG" id="neu:NE0110"/>
<dbReference type="eggNOG" id="COG1343">
    <property type="taxonomic scope" value="Bacteria"/>
</dbReference>
<dbReference type="HOGENOM" id="CLU_161124_1_0_4"/>
<dbReference type="OrthoDB" id="9798176at2"/>
<dbReference type="Proteomes" id="UP000001416">
    <property type="component" value="Chromosome"/>
</dbReference>
<dbReference type="GO" id="GO:0046872">
    <property type="term" value="F:metal ion binding"/>
    <property type="evidence" value="ECO:0007669"/>
    <property type="project" value="UniProtKB-UniRule"/>
</dbReference>
<dbReference type="GO" id="GO:0004521">
    <property type="term" value="F:RNA endonuclease activity"/>
    <property type="evidence" value="ECO:0007669"/>
    <property type="project" value="InterPro"/>
</dbReference>
<dbReference type="GO" id="GO:0051607">
    <property type="term" value="P:defense response to virus"/>
    <property type="evidence" value="ECO:0007669"/>
    <property type="project" value="UniProtKB-UniRule"/>
</dbReference>
<dbReference type="GO" id="GO:0043571">
    <property type="term" value="P:maintenance of CRISPR repeat elements"/>
    <property type="evidence" value="ECO:0007669"/>
    <property type="project" value="UniProtKB-UniRule"/>
</dbReference>
<dbReference type="CDD" id="cd09725">
    <property type="entry name" value="Cas2_I_II_III"/>
    <property type="match status" value="1"/>
</dbReference>
<dbReference type="Gene3D" id="3.30.70.240">
    <property type="match status" value="1"/>
</dbReference>
<dbReference type="HAMAP" id="MF_01471">
    <property type="entry name" value="Cas2"/>
    <property type="match status" value="1"/>
</dbReference>
<dbReference type="InterPro" id="IPR021127">
    <property type="entry name" value="CRISPR_associated_Cas2"/>
</dbReference>
<dbReference type="InterPro" id="IPR019199">
    <property type="entry name" value="Virulence_VapD/CRISPR_Cas2"/>
</dbReference>
<dbReference type="NCBIfam" id="TIGR01573">
    <property type="entry name" value="cas2"/>
    <property type="match status" value="1"/>
</dbReference>
<dbReference type="PANTHER" id="PTHR34405">
    <property type="entry name" value="CRISPR-ASSOCIATED ENDORIBONUCLEASE CAS2"/>
    <property type="match status" value="1"/>
</dbReference>
<dbReference type="PANTHER" id="PTHR34405:SF3">
    <property type="entry name" value="CRISPR-ASSOCIATED ENDORIBONUCLEASE CAS2 3"/>
    <property type="match status" value="1"/>
</dbReference>
<dbReference type="Pfam" id="PF09827">
    <property type="entry name" value="CRISPR_Cas2"/>
    <property type="match status" value="1"/>
</dbReference>
<dbReference type="SUPFAM" id="SSF143430">
    <property type="entry name" value="TTP0101/SSO1404-like"/>
    <property type="match status" value="1"/>
</dbReference>
<comment type="function">
    <text evidence="1">CRISPR (clustered regularly interspaced short palindromic repeat), is an adaptive immune system that provides protection against mobile genetic elements (viruses, transposable elements and conjugative plasmids). CRISPR clusters contain sequences complementary to antecedent mobile elements and target invading nucleic acids. CRISPR clusters are transcribed and processed into CRISPR RNA (crRNA). Functions as a ssRNA-specific endoribonuclease. Involved in the integration of spacer DNA into the CRISPR cassette (By similarity).</text>
</comment>
<comment type="cofactor">
    <cofactor evidence="1">
        <name>Mg(2+)</name>
        <dbReference type="ChEBI" id="CHEBI:18420"/>
    </cofactor>
</comment>
<comment type="subunit">
    <text evidence="1">Homodimer, forms a heterotetramer with a Cas1 homodimer.</text>
</comment>
<comment type="similarity">
    <text evidence="3">Belongs to the CRISPR-associated endoribonuclease Cas2 protein family.</text>
</comment>
<name>CAS2A_NITEU</name>
<gene>
    <name type="primary">cas21</name>
    <name type="ordered locus">NE0110</name>
</gene>
<organism>
    <name type="scientific">Nitrosomonas europaea (strain ATCC 19718 / CIP 103999 / KCTC 2705 / NBRC 14298)</name>
    <dbReference type="NCBI Taxonomy" id="228410"/>
    <lineage>
        <taxon>Bacteria</taxon>
        <taxon>Pseudomonadati</taxon>
        <taxon>Pseudomonadota</taxon>
        <taxon>Betaproteobacteria</taxon>
        <taxon>Nitrosomonadales</taxon>
        <taxon>Nitrosomonadaceae</taxon>
        <taxon>Nitrosomonas</taxon>
    </lineage>
</organism>
<feature type="chain" id="PRO_0000416944" description="CRISPR-associated endoribonuclease Cas2 1">
    <location>
        <begin position="1"/>
        <end position="105"/>
    </location>
</feature>
<feature type="binding site" evidence="2">
    <location>
        <position position="20"/>
    </location>
    <ligand>
        <name>Mg(2+)</name>
        <dbReference type="ChEBI" id="CHEBI:18420"/>
        <note>catalytic</note>
    </ligand>
</feature>
<keyword id="KW-0051">Antiviral defense</keyword>
<keyword id="KW-0255">Endonuclease</keyword>
<keyword id="KW-0378">Hydrolase</keyword>
<keyword id="KW-0460">Magnesium</keyword>
<keyword id="KW-0479">Metal-binding</keyword>
<keyword id="KW-0540">Nuclease</keyword>
<keyword id="KW-1185">Reference proteome</keyword>
<evidence type="ECO:0000250" key="1"/>
<evidence type="ECO:0000255" key="2"/>
<evidence type="ECO:0000305" key="3"/>
<sequence length="105" mass="12361">MPADHFLKRQAMSDFIICYDITDPRRLGRLYRYLIKRAVPLQYSVFLFRGDDRQLERCIQDAIELIDEKQDDLRVYPLPGRGLKARIGRPTLPEGIQWSGLPAKW</sequence>
<reference key="1">
    <citation type="journal article" date="2003" name="J. Bacteriol.">
        <title>Complete genome sequence of the ammonia-oxidizing bacterium and obligate chemolithoautotroph Nitrosomonas europaea.</title>
        <authorList>
            <person name="Chain P."/>
            <person name="Lamerdin J.E."/>
            <person name="Larimer F.W."/>
            <person name="Regala W."/>
            <person name="Lao V."/>
            <person name="Land M.L."/>
            <person name="Hauser L."/>
            <person name="Hooper A.B."/>
            <person name="Klotz M.G."/>
            <person name="Norton J."/>
            <person name="Sayavedra-Soto L.A."/>
            <person name="Arciero D.M."/>
            <person name="Hommes N.G."/>
            <person name="Whittaker M.M."/>
            <person name="Arp D.J."/>
        </authorList>
    </citation>
    <scope>NUCLEOTIDE SEQUENCE [LARGE SCALE GENOMIC DNA]</scope>
    <source>
        <strain>ATCC 19718 / CIP 103999 / KCTC 2705 / NBRC 14298</strain>
    </source>
</reference>
<proteinExistence type="inferred from homology"/>
<accession>Q82XY2</accession>
<protein>
    <recommendedName>
        <fullName>CRISPR-associated endoribonuclease Cas2 1</fullName>
        <ecNumber>3.1.-.-</ecNumber>
    </recommendedName>
</protein>